<evidence type="ECO:0000255" key="1">
    <source>
        <dbReference type="HAMAP-Rule" id="MF_00201"/>
    </source>
</evidence>
<evidence type="ECO:0000256" key="2">
    <source>
        <dbReference type="SAM" id="MobiDB-lite"/>
    </source>
</evidence>
<feature type="chain" id="PRO_1000193415" description="DNA repair protein RecO">
    <location>
        <begin position="1"/>
        <end position="271"/>
    </location>
</feature>
<feature type="region of interest" description="Disordered" evidence="2">
    <location>
        <begin position="248"/>
        <end position="271"/>
    </location>
</feature>
<feature type="compositionally biased region" description="Basic and acidic residues" evidence="2">
    <location>
        <begin position="253"/>
        <end position="264"/>
    </location>
</feature>
<comment type="function">
    <text evidence="1">Involved in DNA repair and RecF pathway recombination.</text>
</comment>
<comment type="similarity">
    <text evidence="1">Belongs to the RecO family.</text>
</comment>
<reference key="1">
    <citation type="submission" date="2009-03" db="EMBL/GenBank/DDBJ databases">
        <title>Comparison of the complete genome sequences of Rhodococcus erythropolis PR4 and Rhodococcus opacus B4.</title>
        <authorList>
            <person name="Takarada H."/>
            <person name="Sekine M."/>
            <person name="Hosoyama A."/>
            <person name="Yamada R."/>
            <person name="Fujisawa T."/>
            <person name="Omata S."/>
            <person name="Shimizu A."/>
            <person name="Tsukatani N."/>
            <person name="Tanikawa S."/>
            <person name="Fujita N."/>
            <person name="Harayama S."/>
        </authorList>
    </citation>
    <scope>NUCLEOTIDE SEQUENCE [LARGE SCALE GENOMIC DNA]</scope>
    <source>
        <strain>B4</strain>
    </source>
</reference>
<sequence>MRLYRDNAVVLRQHKLGEADRIVTLLTRQHGLVRAVAKGVRRTKSKFGARLEPFAHIDVQLYPGRNLDIVTQVQTVDAFATDIVDDYTRYTTACAILETAERLAGEERAPALQLHRLTVGALRAVAEHHRPCELILDAFLLRAMGFAGWAPALDDCARCSAPGPHRAFHVAAGGAVCVQCRPPGAATPSPGVLDLMDALFRGDWASTEQVPEWLRGQASGLVAAHLQWHLERQLRTLPLIERARPHAAVGVEDSVRQDGDRDSTTRTPSSA</sequence>
<accession>C1AUI5</accession>
<dbReference type="EMBL" id="AP011115">
    <property type="protein sequence ID" value="BAH49193.1"/>
    <property type="molecule type" value="Genomic_DNA"/>
</dbReference>
<dbReference type="RefSeq" id="WP_012688181.1">
    <property type="nucleotide sequence ID" value="NC_012522.1"/>
</dbReference>
<dbReference type="SMR" id="C1AUI5"/>
<dbReference type="STRING" id="632772.ROP_09460"/>
<dbReference type="KEGG" id="rop:ROP_09460"/>
<dbReference type="PATRIC" id="fig|632772.20.peg.1009"/>
<dbReference type="HOGENOM" id="CLU_066632_1_1_11"/>
<dbReference type="OrthoDB" id="9812244at2"/>
<dbReference type="Proteomes" id="UP000002212">
    <property type="component" value="Chromosome"/>
</dbReference>
<dbReference type="GO" id="GO:0043590">
    <property type="term" value="C:bacterial nucleoid"/>
    <property type="evidence" value="ECO:0007669"/>
    <property type="project" value="TreeGrafter"/>
</dbReference>
<dbReference type="GO" id="GO:0006310">
    <property type="term" value="P:DNA recombination"/>
    <property type="evidence" value="ECO:0007669"/>
    <property type="project" value="UniProtKB-UniRule"/>
</dbReference>
<dbReference type="GO" id="GO:0006302">
    <property type="term" value="P:double-strand break repair"/>
    <property type="evidence" value="ECO:0007669"/>
    <property type="project" value="TreeGrafter"/>
</dbReference>
<dbReference type="Gene3D" id="2.40.50.140">
    <property type="entry name" value="Nucleic acid-binding proteins"/>
    <property type="match status" value="1"/>
</dbReference>
<dbReference type="Gene3D" id="1.20.1440.120">
    <property type="entry name" value="Recombination protein O, C-terminal domain"/>
    <property type="match status" value="1"/>
</dbReference>
<dbReference type="Gene3D" id="6.20.220.20">
    <property type="entry name" value="Recombination protein O, zinc-binding domain"/>
    <property type="match status" value="1"/>
</dbReference>
<dbReference type="HAMAP" id="MF_00201">
    <property type="entry name" value="RecO"/>
    <property type="match status" value="1"/>
</dbReference>
<dbReference type="InterPro" id="IPR037278">
    <property type="entry name" value="ARFGAP/RecO"/>
</dbReference>
<dbReference type="InterPro" id="IPR022572">
    <property type="entry name" value="DNA_rep/recomb_RecO_N"/>
</dbReference>
<dbReference type="InterPro" id="IPR012340">
    <property type="entry name" value="NA-bd_OB-fold"/>
</dbReference>
<dbReference type="InterPro" id="IPR003717">
    <property type="entry name" value="RecO"/>
</dbReference>
<dbReference type="InterPro" id="IPR042242">
    <property type="entry name" value="RecO_C"/>
</dbReference>
<dbReference type="NCBIfam" id="TIGR00613">
    <property type="entry name" value="reco"/>
    <property type="match status" value="1"/>
</dbReference>
<dbReference type="PANTHER" id="PTHR33991">
    <property type="entry name" value="DNA REPAIR PROTEIN RECO"/>
    <property type="match status" value="1"/>
</dbReference>
<dbReference type="PANTHER" id="PTHR33991:SF1">
    <property type="entry name" value="DNA REPAIR PROTEIN RECO"/>
    <property type="match status" value="1"/>
</dbReference>
<dbReference type="Pfam" id="PF02565">
    <property type="entry name" value="RecO_C"/>
    <property type="match status" value="1"/>
</dbReference>
<dbReference type="Pfam" id="PF11967">
    <property type="entry name" value="RecO_N"/>
    <property type="match status" value="1"/>
</dbReference>
<dbReference type="SUPFAM" id="SSF57863">
    <property type="entry name" value="ArfGap/RecO-like zinc finger"/>
    <property type="match status" value="1"/>
</dbReference>
<dbReference type="SUPFAM" id="SSF50249">
    <property type="entry name" value="Nucleic acid-binding proteins"/>
    <property type="match status" value="1"/>
</dbReference>
<organism>
    <name type="scientific">Rhodococcus opacus (strain B4)</name>
    <dbReference type="NCBI Taxonomy" id="632772"/>
    <lineage>
        <taxon>Bacteria</taxon>
        <taxon>Bacillati</taxon>
        <taxon>Actinomycetota</taxon>
        <taxon>Actinomycetes</taxon>
        <taxon>Mycobacteriales</taxon>
        <taxon>Nocardiaceae</taxon>
        <taxon>Rhodococcus</taxon>
    </lineage>
</organism>
<protein>
    <recommendedName>
        <fullName evidence="1">DNA repair protein RecO</fullName>
    </recommendedName>
    <alternativeName>
        <fullName evidence="1">Recombination protein O</fullName>
    </alternativeName>
</protein>
<keyword id="KW-0227">DNA damage</keyword>
<keyword id="KW-0233">DNA recombination</keyword>
<keyword id="KW-0234">DNA repair</keyword>
<proteinExistence type="inferred from homology"/>
<gene>
    <name evidence="1" type="primary">recO</name>
    <name type="ordered locus">ROP_09460</name>
</gene>
<name>RECO_RHOOB</name>